<proteinExistence type="inferred from homology"/>
<accession>P0CQ50</accession>
<accession>Q55LE4</accession>
<accession>Q5KA45</accession>
<accession>Q9HF88</accession>
<evidence type="ECO:0000250" key="1"/>
<evidence type="ECO:0000256" key="2">
    <source>
        <dbReference type="SAM" id="MobiDB-lite"/>
    </source>
</evidence>
<evidence type="ECO:0000269" key="3">
    <source>
    </source>
</evidence>
<evidence type="ECO:0000305" key="4"/>
<feature type="initiator methionine" description="Removed" evidence="1">
    <location>
        <position position="1"/>
    </location>
</feature>
<feature type="chain" id="PRO_0000149138" description="Large ribosomal subunit protein eL42">
    <location>
        <begin position="2"/>
        <end position="106"/>
    </location>
</feature>
<feature type="region of interest" description="Disordered" evidence="2">
    <location>
        <begin position="1"/>
        <end position="56"/>
    </location>
</feature>
<feature type="compositionally biased region" description="Basic residues" evidence="2">
    <location>
        <begin position="1"/>
        <end position="29"/>
    </location>
</feature>
<feature type="sequence variant" description="In strain: JEC39, JEC55 and JEC60; confers resistance to cycloheximide, an inhibitor of polypeptide elongation." evidence="3">
    <original>P</original>
    <variation>L</variation>
    <location>
        <position position="56"/>
    </location>
</feature>
<keyword id="KW-0046">Antibiotic resistance</keyword>
<keyword id="KW-0196">Cycloheximide resistance</keyword>
<keyword id="KW-1185">Reference proteome</keyword>
<keyword id="KW-0687">Ribonucleoprotein</keyword>
<keyword id="KW-0689">Ribosomal protein</keyword>
<gene>
    <name type="primary">RPL44</name>
    <name type="synonym">RPL41</name>
    <name type="ordered locus">CNJ03120</name>
</gene>
<sequence length="106" mass="12146">MVNIPKTRRTYCKGKACRKHTPHKVTQYKKGKDSLSAQGKRRYDRKQSGYGGQTKPVFHKKAKTTKKVVLRLECTVCKTKHQLALKRCKHFELGGDKKQRGAAISF</sequence>
<dbReference type="EMBL" id="AE017350">
    <property type="protein sequence ID" value="AAW45874.2"/>
    <property type="molecule type" value="Genomic_DNA"/>
</dbReference>
<dbReference type="RefSeq" id="XP_567391.1">
    <property type="nucleotide sequence ID" value="XM_567391.1"/>
</dbReference>
<dbReference type="SMR" id="P0CQ50"/>
<dbReference type="FunCoup" id="P0CQ50">
    <property type="interactions" value="283"/>
</dbReference>
<dbReference type="STRING" id="214684.P0CQ50"/>
<dbReference type="PaxDb" id="214684-P0CQ50"/>
<dbReference type="EnsemblFungi" id="AAW45874">
    <property type="protein sequence ID" value="AAW45874"/>
    <property type="gene ID" value="CNJ03120"/>
</dbReference>
<dbReference type="VEuPathDB" id="FungiDB:CNJ03120"/>
<dbReference type="InParanoid" id="P0CQ50"/>
<dbReference type="OrthoDB" id="2967263at2759"/>
<dbReference type="Proteomes" id="UP000002149">
    <property type="component" value="Chromosome 10"/>
</dbReference>
<dbReference type="GO" id="GO:0022625">
    <property type="term" value="C:cytosolic large ribosomal subunit"/>
    <property type="evidence" value="ECO:0000318"/>
    <property type="project" value="GO_Central"/>
</dbReference>
<dbReference type="GO" id="GO:0003735">
    <property type="term" value="F:structural constituent of ribosome"/>
    <property type="evidence" value="ECO:0007669"/>
    <property type="project" value="InterPro"/>
</dbReference>
<dbReference type="GO" id="GO:0046677">
    <property type="term" value="P:response to antibiotic"/>
    <property type="evidence" value="ECO:0007669"/>
    <property type="project" value="UniProtKB-KW"/>
</dbReference>
<dbReference type="GO" id="GO:0046898">
    <property type="term" value="P:response to cycloheximide"/>
    <property type="evidence" value="ECO:0007669"/>
    <property type="project" value="UniProtKB-KW"/>
</dbReference>
<dbReference type="GO" id="GO:0006412">
    <property type="term" value="P:translation"/>
    <property type="evidence" value="ECO:0007669"/>
    <property type="project" value="InterPro"/>
</dbReference>
<dbReference type="FunFam" id="3.10.450.80:FF:000001">
    <property type="entry name" value="60S ribosomal protein L44"/>
    <property type="match status" value="1"/>
</dbReference>
<dbReference type="Gene3D" id="3.10.450.80">
    <property type="match status" value="1"/>
</dbReference>
<dbReference type="InterPro" id="IPR000552">
    <property type="entry name" value="Ribosomal_eL44"/>
</dbReference>
<dbReference type="InterPro" id="IPR053708">
    <property type="entry name" value="Ribosomal_LSU_eL42"/>
</dbReference>
<dbReference type="InterPro" id="IPR011332">
    <property type="entry name" value="Ribosomal_zn-bd"/>
</dbReference>
<dbReference type="PANTHER" id="PTHR10369">
    <property type="entry name" value="60S RIBOSOMAL PROTEIN L36A/L44"/>
    <property type="match status" value="1"/>
</dbReference>
<dbReference type="Pfam" id="PF00935">
    <property type="entry name" value="Ribosomal_L44"/>
    <property type="match status" value="1"/>
</dbReference>
<dbReference type="SUPFAM" id="SSF57829">
    <property type="entry name" value="Zn-binding ribosomal proteins"/>
    <property type="match status" value="1"/>
</dbReference>
<dbReference type="PROSITE" id="PS01172">
    <property type="entry name" value="RIBOSOMAL_L44E"/>
    <property type="match status" value="1"/>
</dbReference>
<organism>
    <name type="scientific">Cryptococcus neoformans var. neoformans serotype D (strain JEC21 / ATCC MYA-565)</name>
    <name type="common">Filobasidiella neoformans</name>
    <dbReference type="NCBI Taxonomy" id="214684"/>
    <lineage>
        <taxon>Eukaryota</taxon>
        <taxon>Fungi</taxon>
        <taxon>Dikarya</taxon>
        <taxon>Basidiomycota</taxon>
        <taxon>Agaricomycotina</taxon>
        <taxon>Tremellomycetes</taxon>
        <taxon>Tremellales</taxon>
        <taxon>Cryptococcaceae</taxon>
        <taxon>Cryptococcus</taxon>
        <taxon>Cryptococcus neoformans species complex</taxon>
    </lineage>
</organism>
<reference key="1">
    <citation type="journal article" date="2005" name="Science">
        <title>The genome of the basidiomycetous yeast and human pathogen Cryptococcus neoformans.</title>
        <authorList>
            <person name="Loftus B.J."/>
            <person name="Fung E."/>
            <person name="Roncaglia P."/>
            <person name="Rowley D."/>
            <person name="Amedeo P."/>
            <person name="Bruno D."/>
            <person name="Vamathevan J."/>
            <person name="Miranda M."/>
            <person name="Anderson I.J."/>
            <person name="Fraser J.A."/>
            <person name="Allen J.E."/>
            <person name="Bosdet I.E."/>
            <person name="Brent M.R."/>
            <person name="Chiu R."/>
            <person name="Doering T.L."/>
            <person name="Donlin M.J."/>
            <person name="D'Souza C.A."/>
            <person name="Fox D.S."/>
            <person name="Grinberg V."/>
            <person name="Fu J."/>
            <person name="Fukushima M."/>
            <person name="Haas B.J."/>
            <person name="Huang J.C."/>
            <person name="Janbon G."/>
            <person name="Jones S.J.M."/>
            <person name="Koo H.L."/>
            <person name="Krzywinski M.I."/>
            <person name="Kwon-Chung K.J."/>
            <person name="Lengeler K.B."/>
            <person name="Maiti R."/>
            <person name="Marra M.A."/>
            <person name="Marra R.E."/>
            <person name="Mathewson C.A."/>
            <person name="Mitchell T.G."/>
            <person name="Pertea M."/>
            <person name="Riggs F.R."/>
            <person name="Salzberg S.L."/>
            <person name="Schein J.E."/>
            <person name="Shvartsbeyn A."/>
            <person name="Shin H."/>
            <person name="Shumway M."/>
            <person name="Specht C.A."/>
            <person name="Suh B.B."/>
            <person name="Tenney A."/>
            <person name="Utterback T.R."/>
            <person name="Wickes B.L."/>
            <person name="Wortman J.R."/>
            <person name="Wye N.H."/>
            <person name="Kronstad J.W."/>
            <person name="Lodge J.K."/>
            <person name="Heitman J."/>
            <person name="Davis R.W."/>
            <person name="Fraser C.M."/>
            <person name="Hyman R.W."/>
        </authorList>
    </citation>
    <scope>NUCLEOTIDE SEQUENCE [LARGE SCALE GENOMIC DNA]</scope>
    <source>
        <strain>JEC21 / ATCC MYA-565</strain>
    </source>
</reference>
<reference key="2">
    <citation type="journal article" date="2000" name="Yeast">
        <title>Characterization of the L41 gene in Cryptococcus neoformans: its application as a selectable transformation marker for cycloheximide resistance.</title>
        <authorList>
            <person name="Varma A."/>
            <person name="Kwon-Chung K.J."/>
        </authorList>
    </citation>
    <scope>VARIANT LEU-56</scope>
    <source>
        <strain>B-3501</strain>
        <strain>B-4467</strain>
        <strain>JEC21 / ATCC MYA-565</strain>
        <strain>JEC39</strain>
        <strain>JEC55</strain>
        <strain>JEC60</strain>
    </source>
</reference>
<comment type="miscellaneous">
    <text>Cycloheximide sensitive type.</text>
</comment>
<comment type="similarity">
    <text evidence="4">Belongs to the eukaryotic ribosomal protein eL42 family.</text>
</comment>
<protein>
    <recommendedName>
        <fullName evidence="4">Large ribosomal subunit protein eL42</fullName>
    </recommendedName>
    <alternativeName>
        <fullName>60S ribosomal protein L41</fullName>
    </alternativeName>
    <alternativeName>
        <fullName>60S ribosomal protein L44</fullName>
    </alternativeName>
</protein>
<name>RL44_CRYNJ</name>